<feature type="propeptide" id="PRO_0000418195" evidence="1">
    <location>
        <begin position="1" status="less than"/>
        <end position="94"/>
    </location>
</feature>
<feature type="chain" id="PRO_0000418196" description="Zinc metalloproteinase-disintegrin-like EoMP06">
    <location>
        <begin position="95"/>
        <end position="515"/>
    </location>
</feature>
<feature type="domain" description="Peptidase M12B" evidence="5">
    <location>
        <begin position="100"/>
        <end position="296"/>
    </location>
</feature>
<feature type="domain" description="Disintegrin" evidence="4">
    <location>
        <begin position="304"/>
        <end position="390"/>
    </location>
</feature>
<feature type="short sequence motif" description="D/ECD-tripeptide">
    <location>
        <begin position="368"/>
        <end position="370"/>
    </location>
</feature>
<feature type="active site" evidence="5 6">
    <location>
        <position position="237"/>
    </location>
</feature>
<feature type="binding site" evidence="2">
    <location>
        <position position="103"/>
    </location>
    <ligand>
        <name>Ca(2+)</name>
        <dbReference type="ChEBI" id="CHEBI:29108"/>
        <label>1</label>
    </ligand>
</feature>
<feature type="binding site" evidence="2">
    <location>
        <position position="187"/>
    </location>
    <ligand>
        <name>Ca(2+)</name>
        <dbReference type="ChEBI" id="CHEBI:29108"/>
        <label>1</label>
    </ligand>
</feature>
<feature type="binding site" evidence="2">
    <location>
        <position position="236"/>
    </location>
    <ligand>
        <name>Zn(2+)</name>
        <dbReference type="ChEBI" id="CHEBI:29105"/>
        <note>catalytic</note>
    </ligand>
</feature>
<feature type="binding site" evidence="2">
    <location>
        <position position="240"/>
    </location>
    <ligand>
        <name>Zn(2+)</name>
        <dbReference type="ChEBI" id="CHEBI:29105"/>
        <note>catalytic</note>
    </ligand>
</feature>
<feature type="binding site" evidence="2">
    <location>
        <position position="246"/>
    </location>
    <ligand>
        <name>Zn(2+)</name>
        <dbReference type="ChEBI" id="CHEBI:29105"/>
        <note>catalytic</note>
    </ligand>
</feature>
<feature type="binding site" evidence="2">
    <location>
        <position position="291"/>
    </location>
    <ligand>
        <name>Ca(2+)</name>
        <dbReference type="ChEBI" id="CHEBI:29108"/>
        <label>1</label>
    </ligand>
</feature>
<feature type="binding site" evidence="2">
    <location>
        <position position="306"/>
    </location>
    <ligand>
        <name>Ca(2+)</name>
        <dbReference type="ChEBI" id="CHEBI:29108"/>
        <label>2</label>
    </ligand>
</feature>
<feature type="binding site" evidence="2">
    <location>
        <position position="309"/>
    </location>
    <ligand>
        <name>Ca(2+)</name>
        <dbReference type="ChEBI" id="CHEBI:29108"/>
        <label>2</label>
    </ligand>
</feature>
<feature type="binding site" evidence="2">
    <location>
        <position position="311"/>
    </location>
    <ligand>
        <name>Ca(2+)</name>
        <dbReference type="ChEBI" id="CHEBI:29108"/>
        <label>2</label>
    </ligand>
</feature>
<feature type="binding site" evidence="2">
    <location>
        <position position="313"/>
    </location>
    <ligand>
        <name>Ca(2+)</name>
        <dbReference type="ChEBI" id="CHEBI:29108"/>
        <label>2</label>
    </ligand>
</feature>
<feature type="binding site" evidence="2">
    <location>
        <position position="316"/>
    </location>
    <ligand>
        <name>Ca(2+)</name>
        <dbReference type="ChEBI" id="CHEBI:29108"/>
        <label>2</label>
    </ligand>
</feature>
<feature type="binding site" evidence="2">
    <location>
        <position position="319"/>
    </location>
    <ligand>
        <name>Ca(2+)</name>
        <dbReference type="ChEBI" id="CHEBI:29108"/>
        <label>2</label>
    </ligand>
</feature>
<feature type="binding site" evidence="2">
    <location>
        <position position="370"/>
    </location>
    <ligand>
        <name>Ca(2+)</name>
        <dbReference type="ChEBI" id="CHEBI:29108"/>
        <label>3</label>
    </ligand>
</feature>
<feature type="binding site" evidence="2">
    <location>
        <position position="371"/>
    </location>
    <ligand>
        <name>Ca(2+)</name>
        <dbReference type="ChEBI" id="CHEBI:29108"/>
        <label>3</label>
    </ligand>
</feature>
<feature type="binding site" evidence="2">
    <location>
        <position position="385"/>
    </location>
    <ligand>
        <name>Ca(2+)</name>
        <dbReference type="ChEBI" id="CHEBI:29108"/>
        <label>3</label>
    </ligand>
</feature>
<feature type="modified residue" description="Pyrrolidone carboxylic acid" evidence="1">
    <location>
        <position position="95"/>
    </location>
</feature>
<feature type="glycosylation site" description="N-linked (GlcNAc...) asparagine" evidence="3">
    <location>
        <position position="160"/>
    </location>
</feature>
<feature type="glycosylation site" description="N-linked (GlcNAc...) asparagine" evidence="3">
    <location>
        <position position="194"/>
    </location>
</feature>
<feature type="glycosylation site" description="N-linked (GlcNAc...) asparagine" evidence="3">
    <location>
        <position position="225"/>
    </location>
</feature>
<feature type="disulfide bond" evidence="2">
    <location>
        <begin position="211"/>
        <end position="291"/>
    </location>
</feature>
<feature type="disulfide bond" evidence="2">
    <location>
        <begin position="251"/>
        <end position="275"/>
    </location>
</feature>
<feature type="disulfide bond" evidence="2">
    <location>
        <begin position="253"/>
        <end position="258"/>
    </location>
</feature>
<feature type="disulfide bond" evidence="2">
    <location>
        <begin position="307"/>
        <end position="336"/>
    </location>
</feature>
<feature type="disulfide bond" evidence="2">
    <location>
        <begin position="318"/>
        <end position="331"/>
    </location>
</feature>
<feature type="disulfide bond" evidence="2">
    <location>
        <begin position="320"/>
        <end position="326"/>
    </location>
</feature>
<feature type="disulfide bond" evidence="2">
    <location>
        <begin position="330"/>
        <end position="353"/>
    </location>
</feature>
<feature type="disulfide bond" evidence="2">
    <location>
        <begin position="344"/>
        <end position="350"/>
    </location>
</feature>
<feature type="disulfide bond" evidence="2">
    <location>
        <begin position="349"/>
        <end position="375"/>
    </location>
</feature>
<feature type="disulfide bond" evidence="2">
    <location>
        <begin position="362"/>
        <end position="382"/>
    </location>
</feature>
<feature type="disulfide bond" evidence="2">
    <location>
        <begin position="369"/>
        <end position="401"/>
    </location>
</feature>
<feature type="disulfide bond" evidence="2">
    <location>
        <begin position="394"/>
        <end position="406"/>
    </location>
</feature>
<feature type="disulfide bond" evidence="2">
    <location>
        <begin position="413"/>
        <end position="466"/>
    </location>
</feature>
<feature type="disulfide bond" evidence="2">
    <location>
        <begin position="428"/>
        <end position="477"/>
    </location>
</feature>
<feature type="disulfide bond" evidence="2">
    <location>
        <begin position="441"/>
        <end position="454"/>
    </location>
</feature>
<feature type="disulfide bond" evidence="2">
    <location>
        <begin position="461"/>
        <end position="503"/>
    </location>
</feature>
<feature type="disulfide bond" evidence="2">
    <location>
        <begin position="497"/>
        <end position="508"/>
    </location>
</feature>
<feature type="non-terminal residue" evidence="9">
    <location>
        <position position="1"/>
    </location>
</feature>
<proteinExistence type="evidence at transcript level"/>
<organism>
    <name type="scientific">Echis ocellatus</name>
    <name type="common">Ocellated saw-scaled viper</name>
    <dbReference type="NCBI Taxonomy" id="99586"/>
    <lineage>
        <taxon>Eukaryota</taxon>
        <taxon>Metazoa</taxon>
        <taxon>Chordata</taxon>
        <taxon>Craniata</taxon>
        <taxon>Vertebrata</taxon>
        <taxon>Euteleostomi</taxon>
        <taxon>Lepidosauria</taxon>
        <taxon>Squamata</taxon>
        <taxon>Bifurcata</taxon>
        <taxon>Unidentata</taxon>
        <taxon>Episquamata</taxon>
        <taxon>Toxicofera</taxon>
        <taxon>Serpentes</taxon>
        <taxon>Colubroidea</taxon>
        <taxon>Viperidae</taxon>
        <taxon>Viperinae</taxon>
        <taxon>Echis</taxon>
    </lineage>
</organism>
<reference key="1">
    <citation type="journal article" date="2003" name="Toxicon">
        <title>Cloning of a prothrombin activator-like metalloproteinase from the West African saw-scaled viper, Echis ocellatus.</title>
        <authorList>
            <person name="Hasson S.S."/>
            <person name="Theakston R.D.G."/>
            <person name="Harrison R.A."/>
        </authorList>
    </citation>
    <scope>NUCLEOTIDE SEQUENCE [MRNA]</scope>
    <source>
        <tissue>Venom gland</tissue>
    </source>
</reference>
<reference key="2">
    <citation type="journal article" date="2024" name="Toxins">
        <title>Importance of the cysteine-rich domain of snake venom prothrombin activators: insights gained from synthetic neutralizing antibodies.</title>
        <authorList>
            <person name="Misson Mindrebo L.E."/>
            <person name="Mindrebo J.T."/>
            <person name="Tran Q."/>
            <person name="Wilkinson M.C."/>
            <person name="Smith J.M."/>
            <person name="Verma M."/>
            <person name="Casewell N.R."/>
            <person name="Lander G.C."/>
            <person name="Jardine J.G."/>
        </authorList>
    </citation>
    <scope>COFACTOR</scope>
    <scope>RECOMBINANT EXPRESSION</scope>
</reference>
<accession>Q6X1T6</accession>
<comment type="function">
    <text evidence="2">Snake venom zinc metalloproteinase that catalyzes the conversion of prothrombin (F2) to alpha-thrombin through formation of a thrombin intermediate, thereby functioning as a procoagulant protein.</text>
</comment>
<comment type="cofactor">
    <cofactor evidence="7">
        <name>Zn(2+)</name>
        <dbReference type="ChEBI" id="CHEBI:29105"/>
    </cofactor>
    <text evidence="2">Binds 1 zinc ion per subunit.</text>
</comment>
<comment type="subunit">
    <text evidence="2">Monomer.</text>
</comment>
<comment type="subcellular location">
    <subcellularLocation>
        <location evidence="9">Secreted</location>
    </subcellularLocation>
</comment>
<comment type="tissue specificity">
    <text evidence="9">Expressed by the venom gland.</text>
</comment>
<comment type="similarity">
    <text evidence="8">Belongs to the venom metalloproteinase (M12B) family. P-III subfamily. P-IIIa sub-subfamily.</text>
</comment>
<name>VM3E6_ECHOC</name>
<sequence>VEDHCYYHGRVQNDAESTASISACNGLKGHFKLQGETYFIEPLKIPNSEAHAVYKYENIEKEDEAPKMCGVTQTNWESDEPIKKTLGLIVPPHGQKFEKKFIELIIVVDHSMVTKYNNDLTAVRTEIYERLNTVNEIYLPLNIHVALVGIVFWSNRDLINVTSSAADTLHSFGEWRGSDLLNQKRHDHAQLLTNVTLDGTTLGITFVFGMCKSDRSVELIRDYSNITFNMAYIMAHEMGHSLGMLHDTKSCTCGDKPCIMFSKESVPPPKEFSSCSYDQYNKYLLKYNPKCIVDPPLRKDIASPAVCGNGVWEEGEECDCGSPEDCENPCCDAATCKLKPGAECGNGECCDNCKIRKAGTECRPARDDCDVAEHCTGQSAECPRNEFQRNGQPCLNNSGYCYNGDCPIMLNQCIALFSPSATVAQDSCFQRNLQGSYYGHCRKEIGHYGKRFPCAAQDVKCGRLYCLDNSFKKNMRCKKDFSYSDENKGIVEPGTKCEDGKVCINRKCVDVNTAY</sequence>
<protein>
    <recommendedName>
        <fullName>Zinc metalloproteinase-disintegrin-like EoMP06</fullName>
        <ecNumber>3.4.24.-</ecNumber>
    </recommendedName>
    <alternativeName>
        <fullName>Prothrombin activator EoMP06</fullName>
    </alternativeName>
    <alternativeName>
        <fullName>Snake venom metalloprotease</fullName>
        <shortName>SVMP</shortName>
    </alternativeName>
</protein>
<dbReference type="EC" id="3.4.24.-"/>
<dbReference type="EMBL" id="AY261531">
    <property type="protein sequence ID" value="AAP92424.1"/>
    <property type="molecule type" value="mRNA"/>
</dbReference>
<dbReference type="SMR" id="Q6X1T6"/>
<dbReference type="MEROPS" id="M12.151"/>
<dbReference type="GO" id="GO:0005576">
    <property type="term" value="C:extracellular region"/>
    <property type="evidence" value="ECO:0007669"/>
    <property type="project" value="UniProtKB-SubCell"/>
</dbReference>
<dbReference type="GO" id="GO:0005886">
    <property type="term" value="C:plasma membrane"/>
    <property type="evidence" value="ECO:0007669"/>
    <property type="project" value="TreeGrafter"/>
</dbReference>
<dbReference type="GO" id="GO:0046872">
    <property type="term" value="F:metal ion binding"/>
    <property type="evidence" value="ECO:0007669"/>
    <property type="project" value="UniProtKB-KW"/>
</dbReference>
<dbReference type="GO" id="GO:0004222">
    <property type="term" value="F:metalloendopeptidase activity"/>
    <property type="evidence" value="ECO:0007669"/>
    <property type="project" value="InterPro"/>
</dbReference>
<dbReference type="GO" id="GO:0016504">
    <property type="term" value="F:peptidase activator activity"/>
    <property type="evidence" value="ECO:0007669"/>
    <property type="project" value="UniProtKB-KW"/>
</dbReference>
<dbReference type="GO" id="GO:0090729">
    <property type="term" value="F:toxin activity"/>
    <property type="evidence" value="ECO:0007669"/>
    <property type="project" value="UniProtKB-KW"/>
</dbReference>
<dbReference type="GO" id="GO:0006508">
    <property type="term" value="P:proteolysis"/>
    <property type="evidence" value="ECO:0007669"/>
    <property type="project" value="UniProtKB-KW"/>
</dbReference>
<dbReference type="CDD" id="cd04269">
    <property type="entry name" value="ZnMc_adamalysin_II_like"/>
    <property type="match status" value="1"/>
</dbReference>
<dbReference type="FunFam" id="3.40.390.10:FF:000002">
    <property type="entry name" value="Disintegrin and metalloproteinase domain-containing protein 22"/>
    <property type="match status" value="1"/>
</dbReference>
<dbReference type="FunFam" id="4.10.70.10:FF:000001">
    <property type="entry name" value="Disintegrin and metalloproteinase domain-containing protein 22"/>
    <property type="match status" value="1"/>
</dbReference>
<dbReference type="Gene3D" id="3.40.390.10">
    <property type="entry name" value="Collagenase (Catalytic Domain)"/>
    <property type="match status" value="1"/>
</dbReference>
<dbReference type="Gene3D" id="4.10.70.10">
    <property type="entry name" value="Disintegrin domain"/>
    <property type="match status" value="1"/>
</dbReference>
<dbReference type="InterPro" id="IPR006586">
    <property type="entry name" value="ADAM_Cys-rich"/>
</dbReference>
<dbReference type="InterPro" id="IPR018358">
    <property type="entry name" value="Disintegrin_CS"/>
</dbReference>
<dbReference type="InterPro" id="IPR001762">
    <property type="entry name" value="Disintegrin_dom"/>
</dbReference>
<dbReference type="InterPro" id="IPR036436">
    <property type="entry name" value="Disintegrin_dom_sf"/>
</dbReference>
<dbReference type="InterPro" id="IPR024079">
    <property type="entry name" value="MetalloPept_cat_dom_sf"/>
</dbReference>
<dbReference type="InterPro" id="IPR001590">
    <property type="entry name" value="Peptidase_M12B"/>
</dbReference>
<dbReference type="InterPro" id="IPR034027">
    <property type="entry name" value="Reprolysin_adamalysin"/>
</dbReference>
<dbReference type="PANTHER" id="PTHR11905">
    <property type="entry name" value="ADAM A DISINTEGRIN AND METALLOPROTEASE DOMAIN"/>
    <property type="match status" value="1"/>
</dbReference>
<dbReference type="PANTHER" id="PTHR11905:SF32">
    <property type="entry name" value="DISINTEGRIN AND METALLOPROTEINASE DOMAIN-CONTAINING PROTEIN 28"/>
    <property type="match status" value="1"/>
</dbReference>
<dbReference type="Pfam" id="PF08516">
    <property type="entry name" value="ADAM_CR"/>
    <property type="match status" value="1"/>
</dbReference>
<dbReference type="Pfam" id="PF00200">
    <property type="entry name" value="Disintegrin"/>
    <property type="match status" value="1"/>
</dbReference>
<dbReference type="Pfam" id="PF01421">
    <property type="entry name" value="Reprolysin"/>
    <property type="match status" value="1"/>
</dbReference>
<dbReference type="PRINTS" id="PR00289">
    <property type="entry name" value="DISINTEGRIN"/>
</dbReference>
<dbReference type="SMART" id="SM00608">
    <property type="entry name" value="ACR"/>
    <property type="match status" value="1"/>
</dbReference>
<dbReference type="SMART" id="SM00050">
    <property type="entry name" value="DISIN"/>
    <property type="match status" value="1"/>
</dbReference>
<dbReference type="SUPFAM" id="SSF57552">
    <property type="entry name" value="Blood coagulation inhibitor (disintegrin)"/>
    <property type="match status" value="1"/>
</dbReference>
<dbReference type="SUPFAM" id="SSF55486">
    <property type="entry name" value="Metalloproteases ('zincins'), catalytic domain"/>
    <property type="match status" value="1"/>
</dbReference>
<dbReference type="PROSITE" id="PS50215">
    <property type="entry name" value="ADAM_MEPRO"/>
    <property type="match status" value="1"/>
</dbReference>
<dbReference type="PROSITE" id="PS00427">
    <property type="entry name" value="DISINTEGRIN_1"/>
    <property type="match status" value="1"/>
</dbReference>
<dbReference type="PROSITE" id="PS50214">
    <property type="entry name" value="DISINTEGRIN_2"/>
    <property type="match status" value="1"/>
</dbReference>
<dbReference type="PROSITE" id="PS00142">
    <property type="entry name" value="ZINC_PROTEASE"/>
    <property type="match status" value="1"/>
</dbReference>
<keyword id="KW-1204">Blood coagulation cascade activating toxin</keyword>
<keyword id="KW-0106">Calcium</keyword>
<keyword id="KW-1015">Disulfide bond</keyword>
<keyword id="KW-0325">Glycoprotein</keyword>
<keyword id="KW-1199">Hemostasis impairing toxin</keyword>
<keyword id="KW-0378">Hydrolase</keyword>
<keyword id="KW-0479">Metal-binding</keyword>
<keyword id="KW-0482">Metalloprotease</keyword>
<keyword id="KW-0645">Protease</keyword>
<keyword id="KW-0655">Prothrombin activator</keyword>
<keyword id="KW-0873">Pyrrolidone carboxylic acid</keyword>
<keyword id="KW-0964">Secreted</keyword>
<keyword id="KW-0800">Toxin</keyword>
<keyword id="KW-0862">Zinc</keyword>
<keyword id="KW-0865">Zymogen</keyword>
<evidence type="ECO:0000250" key="1"/>
<evidence type="ECO:0000250" key="2">
    <source>
        <dbReference type="UniProtKB" id="Q90495"/>
    </source>
</evidence>
<evidence type="ECO:0000255" key="3"/>
<evidence type="ECO:0000255" key="4">
    <source>
        <dbReference type="PROSITE-ProRule" id="PRU00068"/>
    </source>
</evidence>
<evidence type="ECO:0000255" key="5">
    <source>
        <dbReference type="PROSITE-ProRule" id="PRU00276"/>
    </source>
</evidence>
<evidence type="ECO:0000255" key="6">
    <source>
        <dbReference type="PROSITE-ProRule" id="PRU10095"/>
    </source>
</evidence>
<evidence type="ECO:0000269" key="7">
    <source>
    </source>
</evidence>
<evidence type="ECO:0000305" key="8"/>
<evidence type="ECO:0000305" key="9">
    <source>
    </source>
</evidence>